<sequence length="105" mass="11272">MIPGEVQVAAGDIELNSGRETVSATVANHGDRPVQVGSHYHFFEVNEALVFDRAPTLGFRLDIPAGTAVRFEPGQARTVQLVAYAGKREVYGFQGKVMGALEGRA</sequence>
<dbReference type="EC" id="3.5.1.5" evidence="1"/>
<dbReference type="EMBL" id="CP000926">
    <property type="protein sequence ID" value="ABY98830.1"/>
    <property type="molecule type" value="Genomic_DNA"/>
</dbReference>
<dbReference type="RefSeq" id="WP_012272563.1">
    <property type="nucleotide sequence ID" value="NC_010322.1"/>
</dbReference>
<dbReference type="SMR" id="B0KUZ8"/>
<dbReference type="KEGG" id="ppg:PputGB1_2936"/>
<dbReference type="eggNOG" id="COG0832">
    <property type="taxonomic scope" value="Bacteria"/>
</dbReference>
<dbReference type="HOGENOM" id="CLU_129707_1_1_6"/>
<dbReference type="UniPathway" id="UPA00258">
    <property type="reaction ID" value="UER00370"/>
</dbReference>
<dbReference type="Proteomes" id="UP000002157">
    <property type="component" value="Chromosome"/>
</dbReference>
<dbReference type="GO" id="GO:0035550">
    <property type="term" value="C:urease complex"/>
    <property type="evidence" value="ECO:0007669"/>
    <property type="project" value="InterPro"/>
</dbReference>
<dbReference type="GO" id="GO:0009039">
    <property type="term" value="F:urease activity"/>
    <property type="evidence" value="ECO:0007669"/>
    <property type="project" value="UniProtKB-UniRule"/>
</dbReference>
<dbReference type="GO" id="GO:0043419">
    <property type="term" value="P:urea catabolic process"/>
    <property type="evidence" value="ECO:0007669"/>
    <property type="project" value="UniProtKB-UniRule"/>
</dbReference>
<dbReference type="CDD" id="cd00407">
    <property type="entry name" value="Urease_beta"/>
    <property type="match status" value="1"/>
</dbReference>
<dbReference type="FunFam" id="2.10.150.10:FF:000001">
    <property type="entry name" value="Urease subunit beta"/>
    <property type="match status" value="1"/>
</dbReference>
<dbReference type="Gene3D" id="2.10.150.10">
    <property type="entry name" value="Urease, beta subunit"/>
    <property type="match status" value="1"/>
</dbReference>
<dbReference type="HAMAP" id="MF_01954">
    <property type="entry name" value="Urease_beta"/>
    <property type="match status" value="1"/>
</dbReference>
<dbReference type="InterPro" id="IPR002019">
    <property type="entry name" value="Urease_beta-like"/>
</dbReference>
<dbReference type="InterPro" id="IPR036461">
    <property type="entry name" value="Urease_betasu_sf"/>
</dbReference>
<dbReference type="InterPro" id="IPR050069">
    <property type="entry name" value="Urease_subunit"/>
</dbReference>
<dbReference type="NCBIfam" id="NF009682">
    <property type="entry name" value="PRK13203.1"/>
    <property type="match status" value="1"/>
</dbReference>
<dbReference type="NCBIfam" id="TIGR00192">
    <property type="entry name" value="urease_beta"/>
    <property type="match status" value="1"/>
</dbReference>
<dbReference type="PANTHER" id="PTHR33569">
    <property type="entry name" value="UREASE"/>
    <property type="match status" value="1"/>
</dbReference>
<dbReference type="PANTHER" id="PTHR33569:SF1">
    <property type="entry name" value="UREASE"/>
    <property type="match status" value="1"/>
</dbReference>
<dbReference type="Pfam" id="PF00699">
    <property type="entry name" value="Urease_beta"/>
    <property type="match status" value="1"/>
</dbReference>
<dbReference type="SUPFAM" id="SSF51278">
    <property type="entry name" value="Urease, beta-subunit"/>
    <property type="match status" value="1"/>
</dbReference>
<reference key="1">
    <citation type="submission" date="2008-01" db="EMBL/GenBank/DDBJ databases">
        <title>Complete sequence of Pseudomonas putida GB-1.</title>
        <authorList>
            <consortium name="US DOE Joint Genome Institute"/>
            <person name="Copeland A."/>
            <person name="Lucas S."/>
            <person name="Lapidus A."/>
            <person name="Barry K."/>
            <person name="Glavina del Rio T."/>
            <person name="Dalin E."/>
            <person name="Tice H."/>
            <person name="Pitluck S."/>
            <person name="Bruce D."/>
            <person name="Goodwin L."/>
            <person name="Chertkov O."/>
            <person name="Brettin T."/>
            <person name="Detter J.C."/>
            <person name="Han C."/>
            <person name="Kuske C.R."/>
            <person name="Schmutz J."/>
            <person name="Larimer F."/>
            <person name="Land M."/>
            <person name="Hauser L."/>
            <person name="Kyrpides N."/>
            <person name="Kim E."/>
            <person name="McCarthy J.K."/>
            <person name="Richardson P."/>
        </authorList>
    </citation>
    <scope>NUCLEOTIDE SEQUENCE [LARGE SCALE GENOMIC DNA]</scope>
    <source>
        <strain>GB-1</strain>
    </source>
</reference>
<name>URE2_PSEPG</name>
<protein>
    <recommendedName>
        <fullName evidence="1">Urease subunit beta</fullName>
        <ecNumber evidence="1">3.5.1.5</ecNumber>
    </recommendedName>
    <alternativeName>
        <fullName evidence="1">Urea amidohydrolase subunit beta</fullName>
    </alternativeName>
</protein>
<gene>
    <name evidence="1" type="primary">ureB</name>
    <name type="ordered locus">PputGB1_2936</name>
</gene>
<feature type="chain" id="PRO_1000088508" description="Urease subunit beta">
    <location>
        <begin position="1"/>
        <end position="105"/>
    </location>
</feature>
<comment type="catalytic activity">
    <reaction evidence="1">
        <text>urea + 2 H2O + H(+) = hydrogencarbonate + 2 NH4(+)</text>
        <dbReference type="Rhea" id="RHEA:20557"/>
        <dbReference type="ChEBI" id="CHEBI:15377"/>
        <dbReference type="ChEBI" id="CHEBI:15378"/>
        <dbReference type="ChEBI" id="CHEBI:16199"/>
        <dbReference type="ChEBI" id="CHEBI:17544"/>
        <dbReference type="ChEBI" id="CHEBI:28938"/>
        <dbReference type="EC" id="3.5.1.5"/>
    </reaction>
</comment>
<comment type="pathway">
    <text evidence="1">Nitrogen metabolism; urea degradation; CO(2) and NH(3) from urea (urease route): step 1/1.</text>
</comment>
<comment type="subunit">
    <text evidence="1">Heterotrimer of UreA (gamma), UreB (beta) and UreC (alpha) subunits. Three heterotrimers associate to form the active enzyme.</text>
</comment>
<comment type="subcellular location">
    <subcellularLocation>
        <location evidence="1">Cytoplasm</location>
    </subcellularLocation>
</comment>
<comment type="similarity">
    <text evidence="1">Belongs to the urease beta subunit family.</text>
</comment>
<accession>B0KUZ8</accession>
<organism>
    <name type="scientific">Pseudomonas putida (strain GB-1)</name>
    <dbReference type="NCBI Taxonomy" id="76869"/>
    <lineage>
        <taxon>Bacteria</taxon>
        <taxon>Pseudomonadati</taxon>
        <taxon>Pseudomonadota</taxon>
        <taxon>Gammaproteobacteria</taxon>
        <taxon>Pseudomonadales</taxon>
        <taxon>Pseudomonadaceae</taxon>
        <taxon>Pseudomonas</taxon>
    </lineage>
</organism>
<keyword id="KW-0963">Cytoplasm</keyword>
<keyword id="KW-0378">Hydrolase</keyword>
<proteinExistence type="inferred from homology"/>
<evidence type="ECO:0000255" key="1">
    <source>
        <dbReference type="HAMAP-Rule" id="MF_01954"/>
    </source>
</evidence>